<evidence type="ECO:0000250" key="1"/>
<evidence type="ECO:0000250" key="2">
    <source>
        <dbReference type="UniProtKB" id="P20411"/>
    </source>
</evidence>
<evidence type="ECO:0000250" key="3">
    <source>
        <dbReference type="UniProtKB" id="P20491"/>
    </source>
</evidence>
<evidence type="ECO:0000250" key="4">
    <source>
        <dbReference type="UniProtKB" id="P30273"/>
    </source>
</evidence>
<evidence type="ECO:0000255" key="5"/>
<evidence type="ECO:0000255" key="6">
    <source>
        <dbReference type="PROSITE-ProRule" id="PRU00379"/>
    </source>
</evidence>
<evidence type="ECO:0000305" key="7"/>
<reference key="1">
    <citation type="submission" date="1993-05" db="EMBL/GenBank/DDBJ databases">
        <authorList>
            <person name="Yamashita T."/>
        </authorList>
    </citation>
    <scope>NUCLEOTIDE SEQUENCE [MRNA]</scope>
</reference>
<sequence length="86" mass="9742">MYPAVVLLLLLLVEQAAALGEPQLCYILDAILFLYGIILTLLYCRLKIQVRKATVASYEKPDGIYTGLSTRNQETYETLKHEKPPQ</sequence>
<name>FCERG_CAVPO</name>
<gene>
    <name type="primary">FCER1G</name>
</gene>
<comment type="function">
    <text evidence="3">Adapter protein containing an immunoreceptor tyrosine-based activation motif (ITAM) that transduces activation signals from various immunoreceptors. As a component of the high-affinity immunoglobulin E (IgE) receptor, mediates allergic inflammatory signaling in mast cells. As a constitutive component of interleukin-3 receptor complex, selectively mediates interleukin 4/IL4 production by basophils priming T-cells toward effector T-helper 2 subset. Associates with pattern recognition receptors CLEC4D and CLEC4E to form a functional signaling complex in myeloid cells. Binding of mycobacterial trehalose 6,6'-dimycolate (TDM) to this receptor complex leads to phosphorylation of ITAM, triggering activation of SYK, CARD9 and NF-kappa-B, consequently driving maturation of antigen-presenting cells and shaping antigen-specific priming of T-cells toward effector T-helper 1 and T-helper 17 cell subtypes. May function cooperatively with other activating receptors. Functionally linked to integrin beta-2/ITGB2-mediated neutrophil activation. Also involved in integrin alpha-2/ITGA2-mediated platelet activation.</text>
</comment>
<comment type="subunit">
    <text evidence="2 3 4">IgE Fc receptor is a tetramer of an alpha chain, a beta chain, and two disulfide linked gamma chains. Associates with FCGR1A; forms a functional signaling complex (By similarity). The signaling subunit of immunoglobulin gamma (IgG) Fc receptor complex. As a homodimer or a heterodimer of CD247 and FCER1G, associates with the ligand binding subunit FCGR3A to form a functional receptor complex (By similarity). Associates with CLEC6A. Interacts with CLEC4E. Interacts (via ITAM domain) with SYK (via SH2 domains); activates SYK, enabling integrin-mediated activation of neutrophils and macrophages (By similarity). Interacts with CSF2RB and recruits SYK in response to IL3 stimulation; this interaction is direct (By similarity). Interacts with CD300LH; the interaction may be indirect. Interacts with CD300LD (By similarity). Interacts with TARM1 (By similarity).</text>
</comment>
<comment type="subcellular location">
    <subcellularLocation>
        <location evidence="1">Cell membrane</location>
        <topology evidence="1">Single-pass type I membrane protein</topology>
    </subcellularLocation>
</comment>
<comment type="similarity">
    <text evidence="7">Belongs to the CD3Z/FCER1G family.</text>
</comment>
<accession>Q07249</accession>
<organism>
    <name type="scientific">Cavia porcellus</name>
    <name type="common">Guinea pig</name>
    <dbReference type="NCBI Taxonomy" id="10141"/>
    <lineage>
        <taxon>Eukaryota</taxon>
        <taxon>Metazoa</taxon>
        <taxon>Chordata</taxon>
        <taxon>Craniata</taxon>
        <taxon>Vertebrata</taxon>
        <taxon>Euteleostomi</taxon>
        <taxon>Mammalia</taxon>
        <taxon>Eutheria</taxon>
        <taxon>Euarchontoglires</taxon>
        <taxon>Glires</taxon>
        <taxon>Rodentia</taxon>
        <taxon>Hystricomorpha</taxon>
        <taxon>Caviidae</taxon>
        <taxon>Cavia</taxon>
    </lineage>
</organism>
<feature type="signal peptide" evidence="5">
    <location>
        <begin position="1"/>
        <end position="18"/>
    </location>
</feature>
<feature type="chain" id="PRO_0000016500" description="High affinity immunoglobulin epsilon receptor subunit gamma">
    <location>
        <begin position="19"/>
        <end position="86"/>
    </location>
</feature>
<feature type="topological domain" description="Extracellular" evidence="5">
    <location>
        <begin position="19"/>
        <end position="23"/>
    </location>
</feature>
<feature type="transmembrane region" description="Helical" evidence="5">
    <location>
        <begin position="24"/>
        <end position="44"/>
    </location>
</feature>
<feature type="topological domain" description="Cytoplasmic" evidence="5">
    <location>
        <begin position="45"/>
        <end position="86"/>
    </location>
</feature>
<feature type="domain" description="ITAM" evidence="6">
    <location>
        <begin position="54"/>
        <end position="82"/>
    </location>
</feature>
<feature type="modified residue" description="Phosphotyrosine" evidence="3 6">
    <location>
        <position position="65"/>
    </location>
</feature>
<feature type="modified residue" description="Phosphoserine" evidence="4">
    <location>
        <position position="69"/>
    </location>
</feature>
<feature type="modified residue" description="Phosphotyrosine" evidence="3 6">
    <location>
        <position position="76"/>
    </location>
</feature>
<feature type="modified residue" description="Phosphothreonine" evidence="3">
    <location>
        <position position="78"/>
    </location>
</feature>
<feature type="disulfide bond" description="Interchain" evidence="1">
    <location>
        <position position="25"/>
    </location>
</feature>
<keyword id="KW-1003">Cell membrane</keyword>
<keyword id="KW-1015">Disulfide bond</keyword>
<keyword id="KW-0389">IgE-binding protein</keyword>
<keyword id="KW-0391">Immunity</keyword>
<keyword id="KW-0399">Innate immunity</keyword>
<keyword id="KW-0472">Membrane</keyword>
<keyword id="KW-0597">Phosphoprotein</keyword>
<keyword id="KW-0675">Receptor</keyword>
<keyword id="KW-1185">Reference proteome</keyword>
<keyword id="KW-0732">Signal</keyword>
<keyword id="KW-0812">Transmembrane</keyword>
<keyword id="KW-1133">Transmembrane helix</keyword>
<proteinExistence type="inferred from homology"/>
<dbReference type="EMBL" id="D16188">
    <property type="protein sequence ID" value="BAA03729.1"/>
    <property type="molecule type" value="mRNA"/>
</dbReference>
<dbReference type="SMR" id="Q07249"/>
<dbReference type="FunCoup" id="Q07249">
    <property type="interactions" value="452"/>
</dbReference>
<dbReference type="STRING" id="10141.ENSCPOP00000027770"/>
<dbReference type="eggNOG" id="ENOG502S7XC">
    <property type="taxonomic scope" value="Eukaryota"/>
</dbReference>
<dbReference type="InParanoid" id="Q07249"/>
<dbReference type="Proteomes" id="UP000005447">
    <property type="component" value="Unassembled WGS sequence"/>
</dbReference>
<dbReference type="GO" id="GO:0009897">
    <property type="term" value="C:external side of plasma membrane"/>
    <property type="evidence" value="ECO:0007669"/>
    <property type="project" value="TreeGrafter"/>
</dbReference>
<dbReference type="GO" id="GO:0032998">
    <property type="term" value="C:Fc-epsilon receptor I complex"/>
    <property type="evidence" value="ECO:0007669"/>
    <property type="project" value="InterPro"/>
</dbReference>
<dbReference type="GO" id="GO:0019863">
    <property type="term" value="F:IgE binding"/>
    <property type="evidence" value="ECO:0007669"/>
    <property type="project" value="UniProtKB-KW"/>
</dbReference>
<dbReference type="GO" id="GO:0019767">
    <property type="term" value="F:IgE receptor activity"/>
    <property type="evidence" value="ECO:0007669"/>
    <property type="project" value="InterPro"/>
</dbReference>
<dbReference type="GO" id="GO:0019864">
    <property type="term" value="F:IgG binding"/>
    <property type="evidence" value="ECO:0007669"/>
    <property type="project" value="TreeGrafter"/>
</dbReference>
<dbReference type="GO" id="GO:0042590">
    <property type="term" value="P:antigen processing and presentation of exogenous peptide antigen via MHC class I"/>
    <property type="evidence" value="ECO:0007669"/>
    <property type="project" value="TreeGrafter"/>
</dbReference>
<dbReference type="GO" id="GO:0019886">
    <property type="term" value="P:antigen processing and presentation of exogenous peptide antigen via MHC class II"/>
    <property type="evidence" value="ECO:0007669"/>
    <property type="project" value="TreeGrafter"/>
</dbReference>
<dbReference type="GO" id="GO:0071404">
    <property type="term" value="P:cellular response to low-density lipoprotein particle stimulus"/>
    <property type="evidence" value="ECO:0000250"/>
    <property type="project" value="UniProtKB"/>
</dbReference>
<dbReference type="GO" id="GO:0042742">
    <property type="term" value="P:defense response to bacterium"/>
    <property type="evidence" value="ECO:0007669"/>
    <property type="project" value="TreeGrafter"/>
</dbReference>
<dbReference type="GO" id="GO:0002431">
    <property type="term" value="P:Fc receptor mediated stimulatory signaling pathway"/>
    <property type="evidence" value="ECO:0007669"/>
    <property type="project" value="TreeGrafter"/>
</dbReference>
<dbReference type="GO" id="GO:0038094">
    <property type="term" value="P:Fc-gamma receptor signaling pathway"/>
    <property type="evidence" value="ECO:0007669"/>
    <property type="project" value="TreeGrafter"/>
</dbReference>
<dbReference type="GO" id="GO:0016064">
    <property type="term" value="P:immunoglobulin mediated immune response"/>
    <property type="evidence" value="ECO:0007669"/>
    <property type="project" value="TreeGrafter"/>
</dbReference>
<dbReference type="GO" id="GO:0045087">
    <property type="term" value="P:innate immune response"/>
    <property type="evidence" value="ECO:0007669"/>
    <property type="project" value="UniProtKB-KW"/>
</dbReference>
<dbReference type="GO" id="GO:0038156">
    <property type="term" value="P:interleukin-3-mediated signaling pathway"/>
    <property type="evidence" value="ECO:0000250"/>
    <property type="project" value="UniProtKB"/>
</dbReference>
<dbReference type="GO" id="GO:0002283">
    <property type="term" value="P:neutrophil activation involved in immune response"/>
    <property type="evidence" value="ECO:0007669"/>
    <property type="project" value="TreeGrafter"/>
</dbReference>
<dbReference type="GO" id="GO:0030593">
    <property type="term" value="P:neutrophil chemotaxis"/>
    <property type="evidence" value="ECO:0007669"/>
    <property type="project" value="TreeGrafter"/>
</dbReference>
<dbReference type="GO" id="GO:0032753">
    <property type="term" value="P:positive regulation of interleukin-4 production"/>
    <property type="evidence" value="ECO:0000250"/>
    <property type="project" value="UniProtKB"/>
</dbReference>
<dbReference type="GO" id="GO:0050766">
    <property type="term" value="P:positive regulation of phagocytosis"/>
    <property type="evidence" value="ECO:0007669"/>
    <property type="project" value="TreeGrafter"/>
</dbReference>
<dbReference type="GO" id="GO:0031623">
    <property type="term" value="P:receptor internalization"/>
    <property type="evidence" value="ECO:0000250"/>
    <property type="project" value="UniProtKB"/>
</dbReference>
<dbReference type="GO" id="GO:0010543">
    <property type="term" value="P:regulation of platelet activation"/>
    <property type="evidence" value="ECO:0007669"/>
    <property type="project" value="TreeGrafter"/>
</dbReference>
<dbReference type="GO" id="GO:0002292">
    <property type="term" value="P:T cell differentiation involved in immune response"/>
    <property type="evidence" value="ECO:0007669"/>
    <property type="project" value="TreeGrafter"/>
</dbReference>
<dbReference type="InterPro" id="IPR021663">
    <property type="entry name" value="CD3_zeta/IgE_Fc_rcpt_gamma"/>
</dbReference>
<dbReference type="InterPro" id="IPR042340">
    <property type="entry name" value="FCER1G"/>
</dbReference>
<dbReference type="InterPro" id="IPR003110">
    <property type="entry name" value="Phos_immunorcpt_sig_ITAM"/>
</dbReference>
<dbReference type="PANTHER" id="PTHR16803">
    <property type="entry name" value="HIGH AFFINITY IMMUNOGLOBULIN EPSILON RECEPTOR GAMMA-SUBUNIT"/>
    <property type="match status" value="1"/>
</dbReference>
<dbReference type="PANTHER" id="PTHR16803:SF0">
    <property type="entry name" value="HIGH AFFINITY IMMUNOGLOBULIN EPSILON RECEPTOR SUBUNIT GAMMA"/>
    <property type="match status" value="1"/>
</dbReference>
<dbReference type="Pfam" id="PF02189">
    <property type="entry name" value="ITAM"/>
    <property type="match status" value="1"/>
</dbReference>
<dbReference type="Pfam" id="PF11628">
    <property type="entry name" value="TCR_zetazeta"/>
    <property type="match status" value="1"/>
</dbReference>
<dbReference type="SMART" id="SM00077">
    <property type="entry name" value="ITAM"/>
    <property type="match status" value="1"/>
</dbReference>
<dbReference type="PROSITE" id="PS51055">
    <property type="entry name" value="ITAM_1"/>
    <property type="match status" value="1"/>
</dbReference>
<protein>
    <recommendedName>
        <fullName>High affinity immunoglobulin epsilon receptor subunit gamma</fullName>
    </recommendedName>
    <alternativeName>
        <fullName>Fc receptor gamma-chain</fullName>
        <shortName>FcRgamma</shortName>
    </alternativeName>
    <alternativeName>
        <fullName>Fc-epsilon RI-gamma</fullName>
    </alternativeName>
    <alternativeName>
        <fullName>IgE Fc receptor subunit gamma</fullName>
        <shortName>FceRI gamma</shortName>
    </alternativeName>
</protein>